<organism>
    <name type="scientific">Bacillus cereus (strain 03BB102)</name>
    <dbReference type="NCBI Taxonomy" id="572264"/>
    <lineage>
        <taxon>Bacteria</taxon>
        <taxon>Bacillati</taxon>
        <taxon>Bacillota</taxon>
        <taxon>Bacilli</taxon>
        <taxon>Bacillales</taxon>
        <taxon>Bacillaceae</taxon>
        <taxon>Bacillus</taxon>
        <taxon>Bacillus cereus group</taxon>
    </lineage>
</organism>
<keyword id="KW-0067">ATP-binding</keyword>
<keyword id="KW-0418">Kinase</keyword>
<keyword id="KW-0547">Nucleotide-binding</keyword>
<keyword id="KW-0808">Transferase</keyword>
<gene>
    <name evidence="1" type="primary">iolC</name>
    <name type="ordered locus">BCA_2597</name>
</gene>
<feature type="chain" id="PRO_1000187305" description="5-dehydro-2-deoxygluconokinase">
    <location>
        <begin position="1"/>
        <end position="332"/>
    </location>
</feature>
<dbReference type="EC" id="2.7.1.92" evidence="1"/>
<dbReference type="EMBL" id="CP001407">
    <property type="protein sequence ID" value="ACO26169.1"/>
    <property type="molecule type" value="Genomic_DNA"/>
</dbReference>
<dbReference type="RefSeq" id="WP_001068612.1">
    <property type="nucleotide sequence ID" value="NZ_CP009318.1"/>
</dbReference>
<dbReference type="SMR" id="C1EVJ1"/>
<dbReference type="KEGG" id="bcx:BCA_2597"/>
<dbReference type="PATRIC" id="fig|572264.18.peg.2546"/>
<dbReference type="UniPathway" id="UPA00076">
    <property type="reaction ID" value="UER00146"/>
</dbReference>
<dbReference type="Proteomes" id="UP000002210">
    <property type="component" value="Chromosome"/>
</dbReference>
<dbReference type="GO" id="GO:0047590">
    <property type="term" value="F:5-dehydro-2-deoxygluconokinase activity"/>
    <property type="evidence" value="ECO:0007669"/>
    <property type="project" value="UniProtKB-UniRule"/>
</dbReference>
<dbReference type="GO" id="GO:0005524">
    <property type="term" value="F:ATP binding"/>
    <property type="evidence" value="ECO:0007669"/>
    <property type="project" value="UniProtKB-UniRule"/>
</dbReference>
<dbReference type="GO" id="GO:0019310">
    <property type="term" value="P:inositol catabolic process"/>
    <property type="evidence" value="ECO:0007669"/>
    <property type="project" value="UniProtKB-UniRule"/>
</dbReference>
<dbReference type="CDD" id="cd01166">
    <property type="entry name" value="KdgK"/>
    <property type="match status" value="1"/>
</dbReference>
<dbReference type="Gene3D" id="3.40.1190.20">
    <property type="match status" value="1"/>
</dbReference>
<dbReference type="Gene3D" id="2.20.150.10">
    <property type="entry name" value="putative 5-dehydro-2- deoxygluconokinase"/>
    <property type="match status" value="1"/>
</dbReference>
<dbReference type="HAMAP" id="MF_01668">
    <property type="entry name" value="IolC"/>
    <property type="match status" value="1"/>
</dbReference>
<dbReference type="InterPro" id="IPR002173">
    <property type="entry name" value="Carboh/pur_kinase_PfkB_CS"/>
</dbReference>
<dbReference type="InterPro" id="IPR022841">
    <property type="entry name" value="DKG_kinase_firmi"/>
</dbReference>
<dbReference type="InterPro" id="IPR030830">
    <property type="entry name" value="Myo_inos_IolC"/>
</dbReference>
<dbReference type="InterPro" id="IPR023314">
    <property type="entry name" value="Myo_inos_IolC-like_sf"/>
</dbReference>
<dbReference type="InterPro" id="IPR050306">
    <property type="entry name" value="PfkB_Carbo_kinase"/>
</dbReference>
<dbReference type="InterPro" id="IPR011611">
    <property type="entry name" value="PfkB_dom"/>
</dbReference>
<dbReference type="InterPro" id="IPR029056">
    <property type="entry name" value="Ribokinase-like"/>
</dbReference>
<dbReference type="NCBIfam" id="TIGR04382">
    <property type="entry name" value="myo_inos_iolC_N"/>
    <property type="match status" value="1"/>
</dbReference>
<dbReference type="PANTHER" id="PTHR43085:SF49">
    <property type="entry name" value="5-DEHYDRO-2-DEOXYGLUCONOKINASE"/>
    <property type="match status" value="1"/>
</dbReference>
<dbReference type="PANTHER" id="PTHR43085">
    <property type="entry name" value="HEXOKINASE FAMILY MEMBER"/>
    <property type="match status" value="1"/>
</dbReference>
<dbReference type="Pfam" id="PF00294">
    <property type="entry name" value="PfkB"/>
    <property type="match status" value="1"/>
</dbReference>
<dbReference type="SUPFAM" id="SSF53613">
    <property type="entry name" value="Ribokinase-like"/>
    <property type="match status" value="1"/>
</dbReference>
<dbReference type="PROSITE" id="PS00584">
    <property type="entry name" value="PFKB_KINASES_2"/>
    <property type="match status" value="1"/>
</dbReference>
<reference key="1">
    <citation type="submission" date="2009-02" db="EMBL/GenBank/DDBJ databases">
        <title>Genome sequence of Bacillus cereus 03BB102.</title>
        <authorList>
            <person name="Dodson R.J."/>
            <person name="Jackson P."/>
            <person name="Munk A.C."/>
            <person name="Brettin T."/>
            <person name="Bruce D."/>
            <person name="Detter C."/>
            <person name="Tapia R."/>
            <person name="Han C."/>
            <person name="Sutton G."/>
            <person name="Sims D."/>
        </authorList>
    </citation>
    <scope>NUCLEOTIDE SEQUENCE [LARGE SCALE GENOMIC DNA]</scope>
    <source>
        <strain>03BB102</strain>
    </source>
</reference>
<protein>
    <recommendedName>
        <fullName evidence="1">5-dehydro-2-deoxygluconokinase</fullName>
        <ecNumber evidence="1">2.7.1.92</ecNumber>
    </recommendedName>
    <alternativeName>
        <fullName evidence="1">2-deoxy-5-keto-D-gluconate kinase</fullName>
        <shortName evidence="1">DKG kinase</shortName>
    </alternativeName>
</protein>
<sequence>MNPLIFKEDRPLDLIAVGRLCVDLNANETQRPMEETKTFTKYVGGSPANIAIGASRLGLQTGFIGKVSDDQMGRFITGYLKDNKINTDQIHIDCTGAVTGLAFTEIKSPEDCSILMYRDNVADLNLDPTEVSEDYIKQSKALLISGTALAKSPSREAVFLALEYAHKHDVVVFFDVDYRPYTWQSEAETAVYYNLAAEKSDVIIGTREEFDMMEKLLNYEQSNDQVTAERWFSHYAKIVVIKHGGDGSIAYTRDGQSHRGGIFKTKVLKTFGAGDSYASAFIYGLMQGLEIPQAMRLGGASASIVISKHSCSDAMPTRAEISAFMETAEELV</sequence>
<accession>C1EVJ1</accession>
<proteinExistence type="inferred from homology"/>
<evidence type="ECO:0000255" key="1">
    <source>
        <dbReference type="HAMAP-Rule" id="MF_01668"/>
    </source>
</evidence>
<comment type="function">
    <text evidence="1">Catalyzes the phosphorylation of 5-dehydro-2-deoxy-D-gluconate (2-deoxy-5-keto-D-gluconate or DKG) to 6-phospho-5-dehydro-2-deoxy-D-gluconate (DKGP).</text>
</comment>
<comment type="catalytic activity">
    <reaction evidence="1">
        <text>5-dehydro-2-deoxy-D-gluconate + ATP = 6-phospho-5-dehydro-2-deoxy-D-gluconate + ADP + H(+)</text>
        <dbReference type="Rhea" id="RHEA:13497"/>
        <dbReference type="ChEBI" id="CHEBI:15378"/>
        <dbReference type="ChEBI" id="CHEBI:16669"/>
        <dbReference type="ChEBI" id="CHEBI:30616"/>
        <dbReference type="ChEBI" id="CHEBI:57949"/>
        <dbReference type="ChEBI" id="CHEBI:456216"/>
        <dbReference type="EC" id="2.7.1.92"/>
    </reaction>
</comment>
<comment type="pathway">
    <text evidence="1">Polyol metabolism; myo-inositol degradation into acetyl-CoA; acetyl-CoA from myo-inositol: step 5/7.</text>
</comment>
<comment type="similarity">
    <text evidence="1">Belongs to the carbohydrate kinase PfkB family.</text>
</comment>
<name>IOLC_BACC3</name>